<feature type="chain" id="PRO_0000047033" description="Zinc finger protein SNAI2">
    <location>
        <begin position="1"/>
        <end position="269"/>
    </location>
</feature>
<feature type="zinc finger region" description="C2H2-type 1" evidence="3">
    <location>
        <begin position="129"/>
        <end position="151"/>
    </location>
</feature>
<feature type="zinc finger region" description="C2H2-type 2" evidence="3">
    <location>
        <begin position="160"/>
        <end position="182"/>
    </location>
</feature>
<feature type="zinc finger region" description="C2H2-type 3" evidence="3">
    <location>
        <begin position="186"/>
        <end position="208"/>
    </location>
</feature>
<feature type="zinc finger region" description="C2H2-type 4" evidence="3">
    <location>
        <begin position="214"/>
        <end position="236"/>
    </location>
</feature>
<feature type="zinc finger region" description="C2H2-type 5; atypical" evidence="3">
    <location>
        <begin position="242"/>
        <end position="265"/>
    </location>
</feature>
<feature type="region of interest" description="SNAG domain" evidence="2">
    <location>
        <begin position="1"/>
        <end position="20"/>
    </location>
</feature>
<feature type="region of interest" description="Disordered" evidence="4">
    <location>
        <begin position="81"/>
        <end position="117"/>
    </location>
</feature>
<comment type="function">
    <text evidence="2">Transcriptional repressor that modulates both activator-dependent and basal transcription. Involved in the generation and migration of neural crest cells. Plays a role in mediating RAF1-induced transcriptional repression of the TJ protein, occludin (OCLN) and subsequent oncogenic transformation of epithelial cells. Represses BRCA2 expression by binding to its E2-box-containing silencer and recruiting CTBP1 and HDAC1 in breast cells. In epidermal keratinocytes, binds to the E-box in ITGA3 promoter and represses its transcription. Involved in the regulation of ITGB1 and ITGB4 expression and cell adhesion and proliferation in epidermal keratinocytes. Binds to E-box2 domain of BSG and activates its expression during TGFB1-induced epithelial-mesenchymal transition (EMT) in hepatocytes. Represses E-Cadherin/CDH1 transcription via E-box elements. Involved in osteoblast maturation. Binds to RUNX2 and SOC9 promoters and may act as a positive and negative transcription regulator, respectively, in osteoblasts. Binds to CXCL12 promoter via E-box regions in mesenchymal stem cells and osteoblasts. Plays an essential role in TWIST1-induced EMT and its ability to promote invasion and metastasis (By similarity).</text>
</comment>
<comment type="subunit">
    <text evidence="2">Interacts (via SNAG domain) with LIMD1 (via LIM domains), WTIP (via LIM domains) and AJUBA (via LIM domains). Interacts (via zinc fingers) with KPNA2, KPNB1, and TNPO1. May interact (via zinc fingers) with IPO7 (By similarity).</text>
</comment>
<comment type="subcellular location">
    <subcellularLocation>
        <location evidence="2">Nucleus</location>
    </subcellularLocation>
    <subcellularLocation>
        <location evidence="2">Cytoplasm</location>
    </subcellularLocation>
    <text evidence="2">Observed in discrete foci in interphase nuclei. These nuclear foci do not overlap with the nucleoli, the SP100 and the HP1 heterochromatin or the coiled body, suggesting SNAI2 is associated with active transcription or active splicing regions (By similarity).</text>
</comment>
<comment type="domain">
    <text evidence="1">Repression activity depends on the C-terminal DNA-binding zinc fingers and on the N-terminal repression domain.</text>
</comment>
<comment type="PTM">
    <text evidence="2">Phosphorylated by GSK3B. Once phosphorylated, it becomes a target for ubiquitination.</text>
</comment>
<comment type="PTM">
    <text evidence="2">Ubiquitinated by the SCF(FBXO11) complex; ubiquitination requires previous GSK3B-mediated SNAI2 phosphorylation.</text>
</comment>
<comment type="similarity">
    <text evidence="5">Belongs to the snail C2H2-type zinc-finger protein family.</text>
</comment>
<dbReference type="EMBL" id="U97059">
    <property type="protein sequence ID" value="AAB58704.1"/>
    <property type="molecule type" value="mRNA"/>
</dbReference>
<dbReference type="EMBL" id="U79550">
    <property type="protein sequence ID" value="AAB38365.1"/>
    <property type="molecule type" value="mRNA"/>
</dbReference>
<dbReference type="EMBL" id="AF079305">
    <property type="protein sequence ID" value="AAD23913.1"/>
    <property type="molecule type" value="Genomic_DNA"/>
</dbReference>
<dbReference type="EMBL" id="BC062164">
    <property type="protein sequence ID" value="AAH62164.1"/>
    <property type="molecule type" value="mRNA"/>
</dbReference>
<dbReference type="CCDS" id="CCDS27974.1"/>
<dbReference type="RefSeq" id="NP_035545.1">
    <property type="nucleotide sequence ID" value="NM_011415.3"/>
</dbReference>
<dbReference type="SMR" id="P97469"/>
<dbReference type="BioGRID" id="203334">
    <property type="interactions" value="1"/>
</dbReference>
<dbReference type="DIP" id="DIP-29680N"/>
<dbReference type="FunCoup" id="P97469">
    <property type="interactions" value="1923"/>
</dbReference>
<dbReference type="IntAct" id="P97469">
    <property type="interactions" value="1"/>
</dbReference>
<dbReference type="STRING" id="10090.ENSMUSP00000023356"/>
<dbReference type="iPTMnet" id="P97469"/>
<dbReference type="PhosphoSitePlus" id="P97469"/>
<dbReference type="SwissPalm" id="P97469"/>
<dbReference type="PaxDb" id="10090-ENSMUSP00000023356"/>
<dbReference type="ProteomicsDB" id="257533"/>
<dbReference type="Pumba" id="P97469"/>
<dbReference type="Antibodypedia" id="3182">
    <property type="antibodies" value="1025 antibodies from 43 providers"/>
</dbReference>
<dbReference type="DNASU" id="20583"/>
<dbReference type="Ensembl" id="ENSMUST00000023356.8">
    <property type="protein sequence ID" value="ENSMUSP00000023356.7"/>
    <property type="gene ID" value="ENSMUSG00000022676.8"/>
</dbReference>
<dbReference type="GeneID" id="20583"/>
<dbReference type="KEGG" id="mmu:20583"/>
<dbReference type="UCSC" id="uc007yhm.1">
    <property type="organism name" value="mouse"/>
</dbReference>
<dbReference type="AGR" id="MGI:1096393"/>
<dbReference type="CTD" id="6591"/>
<dbReference type="MGI" id="MGI:1096393">
    <property type="gene designation" value="Snai2"/>
</dbReference>
<dbReference type="VEuPathDB" id="HostDB:ENSMUSG00000022676"/>
<dbReference type="eggNOG" id="KOG2462">
    <property type="taxonomic scope" value="Eukaryota"/>
</dbReference>
<dbReference type="GeneTree" id="ENSGT00940000154511"/>
<dbReference type="HOGENOM" id="CLU_002678_42_3_1"/>
<dbReference type="InParanoid" id="P97469"/>
<dbReference type="OMA" id="HFNSAKK"/>
<dbReference type="OrthoDB" id="5428132at2759"/>
<dbReference type="PhylomeDB" id="P97469"/>
<dbReference type="TreeFam" id="TF315515"/>
<dbReference type="BioGRID-ORCS" id="20583">
    <property type="hits" value="0 hits in 78 CRISPR screens"/>
</dbReference>
<dbReference type="ChiTaRS" id="Snai2">
    <property type="organism name" value="mouse"/>
</dbReference>
<dbReference type="PRO" id="PR:P97469"/>
<dbReference type="Proteomes" id="UP000000589">
    <property type="component" value="Chromosome 16"/>
</dbReference>
<dbReference type="RNAct" id="P97469">
    <property type="molecule type" value="protein"/>
</dbReference>
<dbReference type="Bgee" id="ENSMUSG00000022676">
    <property type="expression patterns" value="Expressed in indifferent gonad and 231 other cell types or tissues"/>
</dbReference>
<dbReference type="ExpressionAtlas" id="P97469">
    <property type="expression patterns" value="baseline and differential"/>
</dbReference>
<dbReference type="GO" id="GO:0000785">
    <property type="term" value="C:chromatin"/>
    <property type="evidence" value="ECO:0007669"/>
    <property type="project" value="Ensembl"/>
</dbReference>
<dbReference type="GO" id="GO:0005737">
    <property type="term" value="C:cytoplasm"/>
    <property type="evidence" value="ECO:0000314"/>
    <property type="project" value="MGI"/>
</dbReference>
<dbReference type="GO" id="GO:0005829">
    <property type="term" value="C:cytosol"/>
    <property type="evidence" value="ECO:0007669"/>
    <property type="project" value="Ensembl"/>
</dbReference>
<dbReference type="GO" id="GO:0005654">
    <property type="term" value="C:nucleoplasm"/>
    <property type="evidence" value="ECO:0007669"/>
    <property type="project" value="Ensembl"/>
</dbReference>
<dbReference type="GO" id="GO:0005634">
    <property type="term" value="C:nucleus"/>
    <property type="evidence" value="ECO:0000314"/>
    <property type="project" value="MGI"/>
</dbReference>
<dbReference type="GO" id="GO:0003682">
    <property type="term" value="F:chromatin binding"/>
    <property type="evidence" value="ECO:0000314"/>
    <property type="project" value="MGI"/>
</dbReference>
<dbReference type="GO" id="GO:0000981">
    <property type="term" value="F:DNA-binding transcription factor activity, RNA polymerase II-specific"/>
    <property type="evidence" value="ECO:0000314"/>
    <property type="project" value="MGI"/>
</dbReference>
<dbReference type="GO" id="GO:0001227">
    <property type="term" value="F:DNA-binding transcription repressor activity, RNA polymerase II-specific"/>
    <property type="evidence" value="ECO:0000314"/>
    <property type="project" value="MGI"/>
</dbReference>
<dbReference type="GO" id="GO:0070888">
    <property type="term" value="F:E-box binding"/>
    <property type="evidence" value="ECO:0007669"/>
    <property type="project" value="Ensembl"/>
</dbReference>
<dbReference type="GO" id="GO:0008270">
    <property type="term" value="F:zinc ion binding"/>
    <property type="evidence" value="ECO:0007669"/>
    <property type="project" value="UniProtKB-KW"/>
</dbReference>
<dbReference type="GO" id="GO:0060536">
    <property type="term" value="P:cartilage morphogenesis"/>
    <property type="evidence" value="ECO:0000316"/>
    <property type="project" value="MGI"/>
</dbReference>
<dbReference type="GO" id="GO:0003273">
    <property type="term" value="P:cell migration involved in endocardial cushion formation"/>
    <property type="evidence" value="ECO:0000315"/>
    <property type="project" value="BHF-UCL"/>
</dbReference>
<dbReference type="GO" id="GO:0071364">
    <property type="term" value="P:cellular response to epidermal growth factor stimulus"/>
    <property type="evidence" value="ECO:0007669"/>
    <property type="project" value="Ensembl"/>
</dbReference>
<dbReference type="GO" id="GO:0071479">
    <property type="term" value="P:cellular response to ionizing radiation"/>
    <property type="evidence" value="ECO:0000316"/>
    <property type="project" value="MGI"/>
</dbReference>
<dbReference type="GO" id="GO:0036120">
    <property type="term" value="P:cellular response to platelet-derived growth factor stimulus"/>
    <property type="evidence" value="ECO:0000304"/>
    <property type="project" value="BHF-UCL"/>
</dbReference>
<dbReference type="GO" id="GO:0006325">
    <property type="term" value="P:chromatin organization"/>
    <property type="evidence" value="ECO:0000315"/>
    <property type="project" value="MGI"/>
</dbReference>
<dbReference type="GO" id="GO:0035921">
    <property type="term" value="P:desmosome disassembly"/>
    <property type="evidence" value="ECO:0000315"/>
    <property type="project" value="BHF-UCL"/>
</dbReference>
<dbReference type="GO" id="GO:0043542">
    <property type="term" value="P:endothelial cell migration"/>
    <property type="evidence" value="ECO:0000315"/>
    <property type="project" value="MGI"/>
</dbReference>
<dbReference type="GO" id="GO:0010631">
    <property type="term" value="P:epithelial cell migration"/>
    <property type="evidence" value="ECO:0000316"/>
    <property type="project" value="MGI"/>
</dbReference>
<dbReference type="GO" id="GO:0001837">
    <property type="term" value="P:epithelial to mesenchymal transition"/>
    <property type="evidence" value="ECO:0000315"/>
    <property type="project" value="BHF-UCL"/>
</dbReference>
<dbReference type="GO" id="GO:0003198">
    <property type="term" value="P:epithelial to mesenchymal transition involved in endocardial cushion formation"/>
    <property type="evidence" value="ECO:0000315"/>
    <property type="project" value="BHF-UCL"/>
</dbReference>
<dbReference type="GO" id="GO:0060429">
    <property type="term" value="P:epithelium development"/>
    <property type="evidence" value="ECO:0000315"/>
    <property type="project" value="BHF-UCL"/>
</dbReference>
<dbReference type="GO" id="GO:0071425">
    <property type="term" value="P:hematopoietic stem cell proliferation"/>
    <property type="evidence" value="ECO:0000315"/>
    <property type="project" value="MGI"/>
</dbReference>
<dbReference type="GO" id="GO:0033028">
    <property type="term" value="P:myeloid cell apoptotic process"/>
    <property type="evidence" value="ECO:0000316"/>
    <property type="project" value="MGI"/>
</dbReference>
<dbReference type="GO" id="GO:2000811">
    <property type="term" value="P:negative regulation of anoikis"/>
    <property type="evidence" value="ECO:0007669"/>
    <property type="project" value="Ensembl"/>
</dbReference>
<dbReference type="GO" id="GO:0090090">
    <property type="term" value="P:negative regulation of canonical Wnt signaling pathway"/>
    <property type="evidence" value="ECO:0007669"/>
    <property type="project" value="Ensembl"/>
</dbReference>
<dbReference type="GO" id="GO:0006933">
    <property type="term" value="P:negative regulation of cell adhesion involved in substrate-bound cell migration"/>
    <property type="evidence" value="ECO:0000315"/>
    <property type="project" value="MGI"/>
</dbReference>
<dbReference type="GO" id="GO:0033629">
    <property type="term" value="P:negative regulation of cell adhesion mediated by integrin"/>
    <property type="evidence" value="ECO:0007669"/>
    <property type="project" value="Ensembl"/>
</dbReference>
<dbReference type="GO" id="GO:0032331">
    <property type="term" value="P:negative regulation of chondrocyte differentiation"/>
    <property type="evidence" value="ECO:0007669"/>
    <property type="project" value="Ensembl"/>
</dbReference>
<dbReference type="GO" id="GO:0043518">
    <property type="term" value="P:negative regulation of DNA damage response, signal transduction by p53 class mediator"/>
    <property type="evidence" value="ECO:0007669"/>
    <property type="project" value="Ensembl"/>
</dbReference>
<dbReference type="GO" id="GO:2001240">
    <property type="term" value="P:negative regulation of extrinsic apoptotic signaling pathway in absence of ligand"/>
    <property type="evidence" value="ECO:0000314"/>
    <property type="project" value="BHF-UCL"/>
</dbReference>
<dbReference type="GO" id="GO:1902034">
    <property type="term" value="P:negative regulation of hematopoietic stem cell proliferation"/>
    <property type="evidence" value="ECO:0000315"/>
    <property type="project" value="MGI"/>
</dbReference>
<dbReference type="GO" id="GO:1902230">
    <property type="term" value="P:negative regulation of intrinsic apoptotic signaling pathway in response to DNA damage"/>
    <property type="evidence" value="ECO:0007669"/>
    <property type="project" value="Ensembl"/>
</dbReference>
<dbReference type="GO" id="GO:0010839">
    <property type="term" value="P:negative regulation of keratinocyte proliferation"/>
    <property type="evidence" value="ECO:0007669"/>
    <property type="project" value="Ensembl"/>
</dbReference>
<dbReference type="GO" id="GO:0033033">
    <property type="term" value="P:negative regulation of myeloid cell apoptotic process"/>
    <property type="evidence" value="ECO:0000316"/>
    <property type="project" value="MGI"/>
</dbReference>
<dbReference type="GO" id="GO:0000122">
    <property type="term" value="P:negative regulation of transcription by RNA polymerase II"/>
    <property type="evidence" value="ECO:0000314"/>
    <property type="project" value="MGI"/>
</dbReference>
<dbReference type="GO" id="GO:0010957">
    <property type="term" value="P:negative regulation of vitamin D biosynthetic process"/>
    <property type="evidence" value="ECO:0007669"/>
    <property type="project" value="Ensembl"/>
</dbReference>
<dbReference type="GO" id="GO:0070563">
    <property type="term" value="P:negative regulation of vitamin D receptor signaling pathway"/>
    <property type="evidence" value="ECO:0007669"/>
    <property type="project" value="Ensembl"/>
</dbReference>
<dbReference type="GO" id="GO:0014032">
    <property type="term" value="P:neural crest cell development"/>
    <property type="evidence" value="ECO:0007669"/>
    <property type="project" value="Ensembl"/>
</dbReference>
<dbReference type="GO" id="GO:0007219">
    <property type="term" value="P:Notch signaling pathway"/>
    <property type="evidence" value="ECO:0000250"/>
    <property type="project" value="BHF-UCL"/>
</dbReference>
<dbReference type="GO" id="GO:0001649">
    <property type="term" value="P:osteoblast differentiation"/>
    <property type="evidence" value="ECO:0007669"/>
    <property type="project" value="Ensembl"/>
</dbReference>
<dbReference type="GO" id="GO:0043473">
    <property type="term" value="P:pigmentation"/>
    <property type="evidence" value="ECO:0000315"/>
    <property type="project" value="BHF-UCL"/>
</dbReference>
<dbReference type="GO" id="GO:2001028">
    <property type="term" value="P:positive regulation of endothelial cell chemotaxis"/>
    <property type="evidence" value="ECO:0000305"/>
    <property type="project" value="BHF-UCL"/>
</dbReference>
<dbReference type="GO" id="GO:0045600">
    <property type="term" value="P:positive regulation of fat cell differentiation"/>
    <property type="evidence" value="ECO:0000315"/>
    <property type="project" value="MGI"/>
</dbReference>
<dbReference type="GO" id="GO:0042981">
    <property type="term" value="P:regulation of apoptotic process"/>
    <property type="evidence" value="ECO:0000305"/>
    <property type="project" value="MGI"/>
</dbReference>
<dbReference type="GO" id="GO:2000810">
    <property type="term" value="P:regulation of bicellular tight junction assembly"/>
    <property type="evidence" value="ECO:0007669"/>
    <property type="project" value="Ensembl"/>
</dbReference>
<dbReference type="GO" id="GO:0060693">
    <property type="term" value="P:regulation of branching involved in salivary gland morphogenesis"/>
    <property type="evidence" value="ECO:0000315"/>
    <property type="project" value="MGI"/>
</dbReference>
<dbReference type="GO" id="GO:0032642">
    <property type="term" value="P:regulation of chemokine production"/>
    <property type="evidence" value="ECO:0007669"/>
    <property type="project" value="Ensembl"/>
</dbReference>
<dbReference type="GO" id="GO:0045667">
    <property type="term" value="P:regulation of osteoblast differentiation"/>
    <property type="evidence" value="ECO:0007669"/>
    <property type="project" value="Ensembl"/>
</dbReference>
<dbReference type="GO" id="GO:0009314">
    <property type="term" value="P:response to radiation"/>
    <property type="evidence" value="ECO:0000314"/>
    <property type="project" value="MGI"/>
</dbReference>
<dbReference type="GO" id="GO:0060021">
    <property type="term" value="P:roof of mouth development"/>
    <property type="evidence" value="ECO:0000315"/>
    <property type="project" value="MGI"/>
</dbReference>
<dbReference type="GO" id="GO:0007605">
    <property type="term" value="P:sensory perception of sound"/>
    <property type="evidence" value="ECO:0000315"/>
    <property type="project" value="BHF-UCL"/>
</dbReference>
<dbReference type="GO" id="GO:0006929">
    <property type="term" value="P:substrate-dependent cell migration"/>
    <property type="evidence" value="ECO:0000315"/>
    <property type="project" value="MGI"/>
</dbReference>
<dbReference type="GO" id="GO:0050872">
    <property type="term" value="P:white fat cell differentiation"/>
    <property type="evidence" value="ECO:0000315"/>
    <property type="project" value="MGI"/>
</dbReference>
<dbReference type="GO" id="GO:0044319">
    <property type="term" value="P:wound healing, spreading of cells"/>
    <property type="evidence" value="ECO:0000304"/>
    <property type="project" value="BHF-UCL"/>
</dbReference>
<dbReference type="FunFam" id="3.30.160.60:FF:000085">
    <property type="entry name" value="Snail zinc finger protein"/>
    <property type="match status" value="1"/>
</dbReference>
<dbReference type="FunFam" id="3.30.160.60:FF:000942">
    <property type="entry name" value="Snail zinc finger protein"/>
    <property type="match status" value="1"/>
</dbReference>
<dbReference type="FunFam" id="3.30.160.60:FF:001114">
    <property type="entry name" value="Zinc finger protein SNAI2"/>
    <property type="match status" value="1"/>
</dbReference>
<dbReference type="FunFam" id="3.30.160.60:FF:000207">
    <property type="entry name" value="zinc finger protein SNAI2"/>
    <property type="match status" value="1"/>
</dbReference>
<dbReference type="Gene3D" id="3.30.160.60">
    <property type="entry name" value="Classic Zinc Finger"/>
    <property type="match status" value="4"/>
</dbReference>
<dbReference type="InterPro" id="IPR050527">
    <property type="entry name" value="Snail/Krueppel_Znf"/>
</dbReference>
<dbReference type="InterPro" id="IPR036236">
    <property type="entry name" value="Znf_C2H2_sf"/>
</dbReference>
<dbReference type="InterPro" id="IPR013087">
    <property type="entry name" value="Znf_C2H2_type"/>
</dbReference>
<dbReference type="PANTHER" id="PTHR24388">
    <property type="entry name" value="ZINC FINGER PROTEIN"/>
    <property type="match status" value="1"/>
</dbReference>
<dbReference type="PANTHER" id="PTHR24388:SF42">
    <property type="entry name" value="ZINC FINGER PROTEIN SNAI2"/>
    <property type="match status" value="1"/>
</dbReference>
<dbReference type="Pfam" id="PF00096">
    <property type="entry name" value="zf-C2H2"/>
    <property type="match status" value="5"/>
</dbReference>
<dbReference type="SMART" id="SM00355">
    <property type="entry name" value="ZnF_C2H2"/>
    <property type="match status" value="5"/>
</dbReference>
<dbReference type="SUPFAM" id="SSF57667">
    <property type="entry name" value="beta-beta-alpha zinc fingers"/>
    <property type="match status" value="4"/>
</dbReference>
<dbReference type="PROSITE" id="PS00028">
    <property type="entry name" value="ZINC_FINGER_C2H2_1"/>
    <property type="match status" value="4"/>
</dbReference>
<dbReference type="PROSITE" id="PS50157">
    <property type="entry name" value="ZINC_FINGER_C2H2_2"/>
    <property type="match status" value="5"/>
</dbReference>
<organism>
    <name type="scientific">Mus musculus</name>
    <name type="common">Mouse</name>
    <dbReference type="NCBI Taxonomy" id="10090"/>
    <lineage>
        <taxon>Eukaryota</taxon>
        <taxon>Metazoa</taxon>
        <taxon>Chordata</taxon>
        <taxon>Craniata</taxon>
        <taxon>Vertebrata</taxon>
        <taxon>Euteleostomi</taxon>
        <taxon>Mammalia</taxon>
        <taxon>Eutheria</taxon>
        <taxon>Euarchontoglires</taxon>
        <taxon>Glires</taxon>
        <taxon>Rodentia</taxon>
        <taxon>Myomorpha</taxon>
        <taxon>Muroidea</taxon>
        <taxon>Muridae</taxon>
        <taxon>Murinae</taxon>
        <taxon>Mus</taxon>
        <taxon>Mus</taxon>
    </lineage>
</organism>
<protein>
    <recommendedName>
        <fullName>Zinc finger protein SNAI2</fullName>
    </recommendedName>
    <alternativeName>
        <fullName>Neural crest transcription factor Slug</fullName>
    </alternativeName>
    <alternativeName>
        <fullName>Protein snail homolog 2</fullName>
    </alternativeName>
</protein>
<proteinExistence type="evidence at protein level"/>
<gene>
    <name type="primary">Snai2</name>
    <name type="synonym">Slug</name>
    <name type="synonym">Slugh</name>
</gene>
<evidence type="ECO:0000250" key="1"/>
<evidence type="ECO:0000250" key="2">
    <source>
        <dbReference type="UniProtKB" id="O43623"/>
    </source>
</evidence>
<evidence type="ECO:0000255" key="3">
    <source>
        <dbReference type="PROSITE-ProRule" id="PRU00042"/>
    </source>
</evidence>
<evidence type="ECO:0000256" key="4">
    <source>
        <dbReference type="SAM" id="MobiDB-lite"/>
    </source>
</evidence>
<evidence type="ECO:0000305" key="5"/>
<keyword id="KW-0963">Cytoplasm</keyword>
<keyword id="KW-0217">Developmental protein</keyword>
<keyword id="KW-0238">DNA-binding</keyword>
<keyword id="KW-0479">Metal-binding</keyword>
<keyword id="KW-0539">Nucleus</keyword>
<keyword id="KW-1185">Reference proteome</keyword>
<keyword id="KW-0677">Repeat</keyword>
<keyword id="KW-0678">Repressor</keyword>
<keyword id="KW-0804">Transcription</keyword>
<keyword id="KW-0805">Transcription regulation</keyword>
<keyword id="KW-0832">Ubl conjugation</keyword>
<keyword id="KW-0862">Zinc</keyword>
<keyword id="KW-0863">Zinc-finger</keyword>
<sequence length="269" mass="30003">MPRSFLVKKHFNASKKPNYSELDTHTVIISPYLYESYPIPVIPKPEILTSGAYSPITVWTSSAAPLHSPLPSGLSPLTGYSSSLGRVSPPPSSDTSSKDHSGSESPISDEEERLQPKLSDPHAIEAEKFQCNLCNKTYSTFSGLAKHKQLHCDAQSRKSFSCKYCDKEYVSLGALKMHIRTHTLPCVCKICGKAFSRPWLLQGHIRTHTGEKPFSCPHCNRAFADRSNLRAHLQTHSDVKKYQCKNCSKTFSRMSLLHKHEESGCCVAH</sequence>
<accession>P97469</accession>
<accession>O09096</accession>
<accession>Q9R211</accession>
<reference key="1">
    <citation type="journal article" date="1997" name="J. Cell Biol.">
        <title>The zinc-finger protein Slug causes desmosome dissociation, an initial and necessary step for growth factor-induced epithelial-mesenchymal transition.</title>
        <authorList>
            <person name="Savagner P."/>
            <person name="Yamada K.M."/>
            <person name="Thiery J.P."/>
        </authorList>
    </citation>
    <scope>NUCLEOTIDE SEQUENCE [MRNA]</scope>
</reference>
<reference key="2">
    <citation type="journal article" date="1998" name="Biochim. Biophys. Acta">
        <title>Genomic organization, expression and chromosomal localization of the mouse Slug (Slugh) gene.</title>
        <authorList>
            <person name="Jiang R."/>
            <person name="Norton C.R."/>
            <person name="Copeland N.G."/>
            <person name="Gilbert D.J."/>
            <person name="Jenkins N.A."/>
            <person name="Gridley T."/>
        </authorList>
    </citation>
    <scope>NUCLEOTIDE SEQUENCE [GENOMIC DNA]</scope>
    <source>
        <strain>129/Sv</strain>
    </source>
</reference>
<reference key="3">
    <citation type="journal article" date="2004" name="Genome Res.">
        <title>The status, quality, and expansion of the NIH full-length cDNA project: the Mammalian Gene Collection (MGC).</title>
        <authorList>
            <consortium name="The MGC Project Team"/>
        </authorList>
    </citation>
    <scope>NUCLEOTIDE SEQUENCE [LARGE SCALE MRNA]</scope>
    <source>
        <tissue>Bone</tissue>
    </source>
</reference>
<reference key="4">
    <citation type="journal article" date="2008" name="Dev. Cell">
        <title>Ajuba LIM proteins are snail/slug corepressors required for neural crest development in Xenopus.</title>
        <authorList>
            <person name="Langer E.M."/>
            <person name="Feng Y."/>
            <person name="Zhaoyuan H."/>
            <person name="Rauscher F.J. III"/>
            <person name="Kroll K.L."/>
            <person name="Longmore G.D."/>
        </authorList>
    </citation>
    <scope>INTERACTION WITH LIMD1; WTIP AND AJUBA</scope>
</reference>
<name>SNAI2_MOUSE</name>